<protein>
    <recommendedName>
        <fullName>Chaperone protein DnaK</fullName>
    </recommendedName>
    <alternativeName>
        <fullName>HSP70</fullName>
    </alternativeName>
    <alternativeName>
        <fullName>Heat shock 70 kDa protein</fullName>
    </alternativeName>
    <alternativeName>
        <fullName>Heat shock protein 70</fullName>
    </alternativeName>
</protein>
<comment type="function">
    <text evidence="1">Acts as a chaperone.</text>
</comment>
<comment type="induction">
    <text evidence="1">By stress conditions e.g. heat shock (By similarity).</text>
</comment>
<comment type="similarity">
    <text evidence="3">Belongs to the heat shock protein 70 family.</text>
</comment>
<sequence>MAGEIAIGIDLGTTNSCVAIKDKVIENAEGARTTPSVVAFTSDGQTLVGAPAQRQAVTNAKNTIVASKRLIGRRFKDNVIKGIQKDYPYKIVEAKNGDAWIEAGGKSYSPSQVGANVLIKLKEAAETYTGKKVTKAVITVPAYFDDAQRTATKDAGRIAGLEVLRIINEPTAAALAYGLDKTATTKNIAVFDLGGGTFDVSILELGDGVFEVKATNGDTHLGGEDFDRMILNFLVEEFKKENGMDLKNDPLALQRLKEAAEKAKKELSSTQETDINLPYITADAAGPKHLNVKFTRAKLESLVSDLIDRTIEPCKKALKDSGLKREEINEVVLVGGMTRMPAVVKKVTEFFGKEPHKGVNPDEVVAIGAAIQANILAGGSDAQDIVLLDVTPLSLGIETLGGVFTKLIDRNTTIPTKRSQTFSTAEDNQSAVTIRVFQGERQMASDNKLLGQFSLGGIPPAPRGMPQIEVTFDIDANGIVHVSAKDKGTGKEQTVKIQASGGLTEEEIKKMVDEAASKADEDKKRRELVEAKNSAESLIHSTEKSLSEYGSKISSSDKQSIDDAISDLKSVLAKDDASLIKEKTDALSKVSMKLGEAMYKESQSASNDSSPKNDSTEEGERVVDPEYEEVKDEDSK</sequence>
<gene>
    <name type="primary">dnaK</name>
</gene>
<keyword id="KW-0067">ATP-binding</keyword>
<keyword id="KW-0143">Chaperone</keyword>
<keyword id="KW-0547">Nucleotide-binding</keyword>
<keyword id="KW-0597">Phosphoprotein</keyword>
<keyword id="KW-0346">Stress response</keyword>
<feature type="chain" id="PRO_0000078461" description="Chaperone protein DnaK">
    <location>
        <begin position="1"/>
        <end position="636"/>
    </location>
</feature>
<feature type="region of interest" description="Disordered" evidence="2">
    <location>
        <begin position="514"/>
        <end position="542"/>
    </location>
</feature>
<feature type="region of interest" description="Disordered" evidence="2">
    <location>
        <begin position="598"/>
        <end position="636"/>
    </location>
</feature>
<feature type="compositionally biased region" description="Basic and acidic residues" evidence="2">
    <location>
        <begin position="514"/>
        <end position="530"/>
    </location>
</feature>
<feature type="compositionally biased region" description="Polar residues" evidence="2">
    <location>
        <begin position="601"/>
        <end position="613"/>
    </location>
</feature>
<feature type="compositionally biased region" description="Basic and acidic residues" evidence="2">
    <location>
        <begin position="614"/>
        <end position="624"/>
    </location>
</feature>
<feature type="compositionally biased region" description="Acidic residues" evidence="2">
    <location>
        <begin position="625"/>
        <end position="636"/>
    </location>
</feature>
<feature type="modified residue" description="Phosphothreonine; by autocatalysis" evidence="1">
    <location>
        <position position="197"/>
    </location>
</feature>
<accession>O85282</accession>
<reference key="1">
    <citation type="journal article" date="1998" name="Infect. Immun.">
        <title>Cloning of the heat shock protein 70 (HSP70) gene of Ehrlichia sennetsu and differential expression of HSP70 and HSP60 mRNA after temperature upshift.</title>
        <authorList>
            <person name="Zhang Y."/>
            <person name="Ohashi N."/>
            <person name="Rikihisa Y."/>
        </authorList>
    </citation>
    <scope>NUCLEOTIDE SEQUENCE [GENOMIC DNA]</scope>
    <source>
        <strain>Japan</strain>
    </source>
</reference>
<dbReference type="EMBL" id="AF060197">
    <property type="protein sequence ID" value="AAC27487.1"/>
    <property type="molecule type" value="Genomic_DNA"/>
</dbReference>
<dbReference type="SMR" id="O85282"/>
<dbReference type="GO" id="GO:0005524">
    <property type="term" value="F:ATP binding"/>
    <property type="evidence" value="ECO:0007669"/>
    <property type="project" value="UniProtKB-UniRule"/>
</dbReference>
<dbReference type="GO" id="GO:0140662">
    <property type="term" value="F:ATP-dependent protein folding chaperone"/>
    <property type="evidence" value="ECO:0007669"/>
    <property type="project" value="InterPro"/>
</dbReference>
<dbReference type="GO" id="GO:0051082">
    <property type="term" value="F:unfolded protein binding"/>
    <property type="evidence" value="ECO:0007669"/>
    <property type="project" value="InterPro"/>
</dbReference>
<dbReference type="FunFam" id="2.60.34.10:FF:000014">
    <property type="entry name" value="Chaperone protein DnaK HSP70"/>
    <property type="match status" value="1"/>
</dbReference>
<dbReference type="FunFam" id="3.30.420.40:FF:000020">
    <property type="entry name" value="Chaperone protein HscA homolog"/>
    <property type="match status" value="1"/>
</dbReference>
<dbReference type="FunFam" id="3.30.30.30:FF:000003">
    <property type="entry name" value="Heat shock protein 9"/>
    <property type="match status" value="1"/>
</dbReference>
<dbReference type="FunFam" id="1.20.1270.10:FF:000001">
    <property type="entry name" value="Molecular chaperone DnaK"/>
    <property type="match status" value="1"/>
</dbReference>
<dbReference type="FunFam" id="3.30.420.40:FF:000004">
    <property type="entry name" value="Molecular chaperone DnaK"/>
    <property type="match status" value="1"/>
</dbReference>
<dbReference type="FunFam" id="3.90.640.10:FF:000003">
    <property type="entry name" value="Molecular chaperone DnaK"/>
    <property type="match status" value="1"/>
</dbReference>
<dbReference type="Gene3D" id="1.20.1270.10">
    <property type="match status" value="1"/>
</dbReference>
<dbReference type="Gene3D" id="3.30.420.40">
    <property type="match status" value="2"/>
</dbReference>
<dbReference type="Gene3D" id="3.90.640.10">
    <property type="entry name" value="Actin, Chain A, domain 4"/>
    <property type="match status" value="1"/>
</dbReference>
<dbReference type="Gene3D" id="2.60.34.10">
    <property type="entry name" value="Substrate Binding Domain Of DNAk, Chain A, domain 1"/>
    <property type="match status" value="1"/>
</dbReference>
<dbReference type="HAMAP" id="MF_00332">
    <property type="entry name" value="DnaK"/>
    <property type="match status" value="1"/>
</dbReference>
<dbReference type="InterPro" id="IPR043129">
    <property type="entry name" value="ATPase_NBD"/>
</dbReference>
<dbReference type="InterPro" id="IPR012725">
    <property type="entry name" value="Chaperone_DnaK"/>
</dbReference>
<dbReference type="InterPro" id="IPR018181">
    <property type="entry name" value="Heat_shock_70_CS"/>
</dbReference>
<dbReference type="InterPro" id="IPR029048">
    <property type="entry name" value="HSP70_C_sf"/>
</dbReference>
<dbReference type="InterPro" id="IPR029047">
    <property type="entry name" value="HSP70_peptide-bd_sf"/>
</dbReference>
<dbReference type="InterPro" id="IPR013126">
    <property type="entry name" value="Hsp_70_fam"/>
</dbReference>
<dbReference type="NCBIfam" id="NF001413">
    <property type="entry name" value="PRK00290.1"/>
    <property type="match status" value="1"/>
</dbReference>
<dbReference type="NCBIfam" id="NF003520">
    <property type="entry name" value="PRK05183.1"/>
    <property type="match status" value="1"/>
</dbReference>
<dbReference type="NCBIfam" id="TIGR02350">
    <property type="entry name" value="prok_dnaK"/>
    <property type="match status" value="1"/>
</dbReference>
<dbReference type="PANTHER" id="PTHR19375">
    <property type="entry name" value="HEAT SHOCK PROTEIN 70KDA"/>
    <property type="match status" value="1"/>
</dbReference>
<dbReference type="Pfam" id="PF00012">
    <property type="entry name" value="HSP70"/>
    <property type="match status" value="1"/>
</dbReference>
<dbReference type="PRINTS" id="PR00301">
    <property type="entry name" value="HEATSHOCK70"/>
</dbReference>
<dbReference type="SUPFAM" id="SSF53067">
    <property type="entry name" value="Actin-like ATPase domain"/>
    <property type="match status" value="2"/>
</dbReference>
<dbReference type="SUPFAM" id="SSF100934">
    <property type="entry name" value="Heat shock protein 70kD (HSP70), C-terminal subdomain"/>
    <property type="match status" value="1"/>
</dbReference>
<dbReference type="SUPFAM" id="SSF100920">
    <property type="entry name" value="Heat shock protein 70kD (HSP70), peptide-binding domain"/>
    <property type="match status" value="1"/>
</dbReference>
<dbReference type="PROSITE" id="PS00297">
    <property type="entry name" value="HSP70_1"/>
    <property type="match status" value="1"/>
</dbReference>
<dbReference type="PROSITE" id="PS00329">
    <property type="entry name" value="HSP70_2"/>
    <property type="match status" value="1"/>
</dbReference>
<dbReference type="PROSITE" id="PS01036">
    <property type="entry name" value="HSP70_3"/>
    <property type="match status" value="1"/>
</dbReference>
<organism>
    <name type="scientific">Neorickettsia sennetsu</name>
    <name type="common">Ehrlichia sennetsu</name>
    <dbReference type="NCBI Taxonomy" id="951"/>
    <lineage>
        <taxon>Bacteria</taxon>
        <taxon>Pseudomonadati</taxon>
        <taxon>Pseudomonadota</taxon>
        <taxon>Alphaproteobacteria</taxon>
        <taxon>Rickettsiales</taxon>
        <taxon>Anaplasmataceae</taxon>
        <taxon>Neorickettsia</taxon>
    </lineage>
</organism>
<evidence type="ECO:0000250" key="1"/>
<evidence type="ECO:0000256" key="2">
    <source>
        <dbReference type="SAM" id="MobiDB-lite"/>
    </source>
</evidence>
<evidence type="ECO:0000305" key="3"/>
<name>DNAK_NEOSE</name>
<proteinExistence type="inferred from homology"/>